<name>RL14_CARHZ</name>
<gene>
    <name evidence="1" type="primary">rplN</name>
    <name type="ordered locus">CHY_2299</name>
</gene>
<keyword id="KW-1185">Reference proteome</keyword>
<keyword id="KW-0687">Ribonucleoprotein</keyword>
<keyword id="KW-0689">Ribosomal protein</keyword>
<keyword id="KW-0694">RNA-binding</keyword>
<keyword id="KW-0699">rRNA-binding</keyword>
<organism>
    <name type="scientific">Carboxydothermus hydrogenoformans (strain ATCC BAA-161 / DSM 6008 / Z-2901)</name>
    <dbReference type="NCBI Taxonomy" id="246194"/>
    <lineage>
        <taxon>Bacteria</taxon>
        <taxon>Bacillati</taxon>
        <taxon>Bacillota</taxon>
        <taxon>Clostridia</taxon>
        <taxon>Thermoanaerobacterales</taxon>
        <taxon>Thermoanaerobacteraceae</taxon>
        <taxon>Carboxydothermus</taxon>
    </lineage>
</organism>
<evidence type="ECO:0000255" key="1">
    <source>
        <dbReference type="HAMAP-Rule" id="MF_01367"/>
    </source>
</evidence>
<evidence type="ECO:0000305" key="2"/>
<proteinExistence type="inferred from homology"/>
<accession>Q3A9S6</accession>
<feature type="chain" id="PRO_0000266467" description="Large ribosomal subunit protein uL14">
    <location>
        <begin position="1"/>
        <end position="122"/>
    </location>
</feature>
<sequence>MIQVQTILNSADNTGAKKLMCIRVLGGSNRRYASLGDIIVCSVKEATPDAVVKKGEVVKAVVVRTKKEVRRPDGTYIKFDENAAVIIKDDKSPRGTRIFGPVARELREKDFMKIISLAPEVL</sequence>
<dbReference type="EMBL" id="CP000141">
    <property type="protein sequence ID" value="ABB13864.1"/>
    <property type="molecule type" value="Genomic_DNA"/>
</dbReference>
<dbReference type="RefSeq" id="WP_011345181.1">
    <property type="nucleotide sequence ID" value="NC_007503.1"/>
</dbReference>
<dbReference type="SMR" id="Q3A9S6"/>
<dbReference type="FunCoup" id="Q3A9S6">
    <property type="interactions" value="420"/>
</dbReference>
<dbReference type="STRING" id="246194.CHY_2299"/>
<dbReference type="KEGG" id="chy:CHY_2299"/>
<dbReference type="eggNOG" id="COG0093">
    <property type="taxonomic scope" value="Bacteria"/>
</dbReference>
<dbReference type="HOGENOM" id="CLU_095071_2_1_9"/>
<dbReference type="InParanoid" id="Q3A9S6"/>
<dbReference type="OrthoDB" id="9806379at2"/>
<dbReference type="Proteomes" id="UP000002706">
    <property type="component" value="Chromosome"/>
</dbReference>
<dbReference type="GO" id="GO:0022625">
    <property type="term" value="C:cytosolic large ribosomal subunit"/>
    <property type="evidence" value="ECO:0007669"/>
    <property type="project" value="TreeGrafter"/>
</dbReference>
<dbReference type="GO" id="GO:0070180">
    <property type="term" value="F:large ribosomal subunit rRNA binding"/>
    <property type="evidence" value="ECO:0007669"/>
    <property type="project" value="TreeGrafter"/>
</dbReference>
<dbReference type="GO" id="GO:0003735">
    <property type="term" value="F:structural constituent of ribosome"/>
    <property type="evidence" value="ECO:0007669"/>
    <property type="project" value="InterPro"/>
</dbReference>
<dbReference type="GO" id="GO:0006412">
    <property type="term" value="P:translation"/>
    <property type="evidence" value="ECO:0007669"/>
    <property type="project" value="UniProtKB-UniRule"/>
</dbReference>
<dbReference type="CDD" id="cd00337">
    <property type="entry name" value="Ribosomal_uL14"/>
    <property type="match status" value="1"/>
</dbReference>
<dbReference type="FunFam" id="2.40.150.20:FF:000001">
    <property type="entry name" value="50S ribosomal protein L14"/>
    <property type="match status" value="1"/>
</dbReference>
<dbReference type="Gene3D" id="2.40.150.20">
    <property type="entry name" value="Ribosomal protein L14"/>
    <property type="match status" value="1"/>
</dbReference>
<dbReference type="HAMAP" id="MF_01367">
    <property type="entry name" value="Ribosomal_uL14"/>
    <property type="match status" value="1"/>
</dbReference>
<dbReference type="InterPro" id="IPR000218">
    <property type="entry name" value="Ribosomal_uL14"/>
</dbReference>
<dbReference type="InterPro" id="IPR005745">
    <property type="entry name" value="Ribosomal_uL14_bac-type"/>
</dbReference>
<dbReference type="InterPro" id="IPR019972">
    <property type="entry name" value="Ribosomal_uL14_CS"/>
</dbReference>
<dbReference type="InterPro" id="IPR036853">
    <property type="entry name" value="Ribosomal_uL14_sf"/>
</dbReference>
<dbReference type="NCBIfam" id="TIGR01067">
    <property type="entry name" value="rplN_bact"/>
    <property type="match status" value="1"/>
</dbReference>
<dbReference type="PANTHER" id="PTHR11761">
    <property type="entry name" value="50S/60S RIBOSOMAL PROTEIN L14/L23"/>
    <property type="match status" value="1"/>
</dbReference>
<dbReference type="PANTHER" id="PTHR11761:SF3">
    <property type="entry name" value="LARGE RIBOSOMAL SUBUNIT PROTEIN UL14M"/>
    <property type="match status" value="1"/>
</dbReference>
<dbReference type="Pfam" id="PF00238">
    <property type="entry name" value="Ribosomal_L14"/>
    <property type="match status" value="1"/>
</dbReference>
<dbReference type="SMART" id="SM01374">
    <property type="entry name" value="Ribosomal_L14"/>
    <property type="match status" value="1"/>
</dbReference>
<dbReference type="SUPFAM" id="SSF50193">
    <property type="entry name" value="Ribosomal protein L14"/>
    <property type="match status" value="1"/>
</dbReference>
<dbReference type="PROSITE" id="PS00049">
    <property type="entry name" value="RIBOSOMAL_L14"/>
    <property type="match status" value="1"/>
</dbReference>
<reference key="1">
    <citation type="journal article" date="2005" name="PLoS Genet.">
        <title>Life in hot carbon monoxide: the complete genome sequence of Carboxydothermus hydrogenoformans Z-2901.</title>
        <authorList>
            <person name="Wu M."/>
            <person name="Ren Q."/>
            <person name="Durkin A.S."/>
            <person name="Daugherty S.C."/>
            <person name="Brinkac L.M."/>
            <person name="Dodson R.J."/>
            <person name="Madupu R."/>
            <person name="Sullivan S.A."/>
            <person name="Kolonay J.F."/>
            <person name="Nelson W.C."/>
            <person name="Tallon L.J."/>
            <person name="Jones K.M."/>
            <person name="Ulrich L.E."/>
            <person name="Gonzalez J.M."/>
            <person name="Zhulin I.B."/>
            <person name="Robb F.T."/>
            <person name="Eisen J.A."/>
        </authorList>
    </citation>
    <scope>NUCLEOTIDE SEQUENCE [LARGE SCALE GENOMIC DNA]</scope>
    <source>
        <strain>ATCC BAA-161 / DSM 6008 / Z-2901</strain>
    </source>
</reference>
<protein>
    <recommendedName>
        <fullName evidence="1">Large ribosomal subunit protein uL14</fullName>
    </recommendedName>
    <alternativeName>
        <fullName evidence="2">50S ribosomal protein L14</fullName>
    </alternativeName>
</protein>
<comment type="function">
    <text evidence="1">Binds to 23S rRNA. Forms part of two intersubunit bridges in the 70S ribosome.</text>
</comment>
<comment type="subunit">
    <text evidence="1">Part of the 50S ribosomal subunit. Forms a cluster with proteins L3 and L19. In the 70S ribosome, L14 and L19 interact and together make contacts with the 16S rRNA in bridges B5 and B8.</text>
</comment>
<comment type="similarity">
    <text evidence="1">Belongs to the universal ribosomal protein uL14 family.</text>
</comment>